<comment type="function">
    <text evidence="1">GTPase that plays an essential role in the late steps of ribosome biogenesis.</text>
</comment>
<comment type="subunit">
    <text evidence="1">Associates with the 50S ribosomal subunit.</text>
</comment>
<comment type="similarity">
    <text evidence="1">Belongs to the TRAFAC class TrmE-Era-EngA-EngB-Septin-like GTPase superfamily. EngA (Der) GTPase family.</text>
</comment>
<accession>B9DTQ3</accession>
<evidence type="ECO:0000255" key="1">
    <source>
        <dbReference type="HAMAP-Rule" id="MF_00195"/>
    </source>
</evidence>
<proteinExistence type="inferred from homology"/>
<sequence length="436" mass="48924">MVLPTVAIVGRPNVGKSTLFNRIAGERISIVEDVEGVTRDRIYATGEWLNRKFSLIDTGGIDDVDAPFMEQIKHQAQIAMDEADVIVFVVSGKEGVTDADEYVAKMLYRTNKPVILAVNKVDNPEMRNDIYDFYALGLGDPYPASSVHGIGTGDILDAIIEKLPVEEEEINDNTIRFSLIGRPNVGKSSLINAILGEERVIASPVAGTTRDAIDTHFTDQDGQEYNMIDTAGMRKSGKVYENTEKYSVMRAMRAIDRSDVVLLVINAEEGIREYDKRIAGFAHEAGKGMIIVVNKWDLLEKDNHTVAKWEADIRDQFQFLSYAPIIFVSALTKQRLNKLPELIKKISESQNKRIPSAVLNDVIMDAIAINPTPTDKGKRLKIFYATQVSVKPPTFVIFVNEEELMHFSYLRFLENQIRAAFTFEGTPIHLIARKRK</sequence>
<protein>
    <recommendedName>
        <fullName evidence="1">GTPase Der</fullName>
    </recommendedName>
    <alternativeName>
        <fullName evidence="1">GTP-binding protein EngA</fullName>
    </alternativeName>
</protein>
<reference key="1">
    <citation type="journal article" date="2009" name="BMC Genomics">
        <title>Evidence for niche adaptation in the genome of the bovine pathogen Streptococcus uberis.</title>
        <authorList>
            <person name="Ward P.N."/>
            <person name="Holden M.T.G."/>
            <person name="Leigh J.A."/>
            <person name="Lennard N."/>
            <person name="Bignell A."/>
            <person name="Barron A."/>
            <person name="Clark L."/>
            <person name="Quail M.A."/>
            <person name="Woodward J."/>
            <person name="Barrell B.G."/>
            <person name="Egan S.A."/>
            <person name="Field T.R."/>
            <person name="Maskell D."/>
            <person name="Kehoe M."/>
            <person name="Dowson C.G."/>
            <person name="Chanter N."/>
            <person name="Whatmore A.M."/>
            <person name="Bentley S.D."/>
            <person name="Parkhill J."/>
        </authorList>
    </citation>
    <scope>NUCLEOTIDE SEQUENCE [LARGE SCALE GENOMIC DNA]</scope>
    <source>
        <strain>ATCC BAA-854 / 0140J</strain>
    </source>
</reference>
<dbReference type="EMBL" id="AM946015">
    <property type="protein sequence ID" value="CAR41004.1"/>
    <property type="molecule type" value="Genomic_DNA"/>
</dbReference>
<dbReference type="RefSeq" id="WP_012657919.1">
    <property type="nucleotide sequence ID" value="NC_012004.1"/>
</dbReference>
<dbReference type="SMR" id="B9DTQ3"/>
<dbReference type="STRING" id="218495.SUB0384"/>
<dbReference type="KEGG" id="sub:SUB0384"/>
<dbReference type="eggNOG" id="COG1160">
    <property type="taxonomic scope" value="Bacteria"/>
</dbReference>
<dbReference type="HOGENOM" id="CLU_016077_6_2_9"/>
<dbReference type="OrthoDB" id="9805918at2"/>
<dbReference type="Proteomes" id="UP000000449">
    <property type="component" value="Chromosome"/>
</dbReference>
<dbReference type="GO" id="GO:0005525">
    <property type="term" value="F:GTP binding"/>
    <property type="evidence" value="ECO:0007669"/>
    <property type="project" value="UniProtKB-UniRule"/>
</dbReference>
<dbReference type="GO" id="GO:0043022">
    <property type="term" value="F:ribosome binding"/>
    <property type="evidence" value="ECO:0007669"/>
    <property type="project" value="TreeGrafter"/>
</dbReference>
<dbReference type="GO" id="GO:0042254">
    <property type="term" value="P:ribosome biogenesis"/>
    <property type="evidence" value="ECO:0007669"/>
    <property type="project" value="UniProtKB-KW"/>
</dbReference>
<dbReference type="CDD" id="cd01894">
    <property type="entry name" value="EngA1"/>
    <property type="match status" value="1"/>
</dbReference>
<dbReference type="CDD" id="cd01895">
    <property type="entry name" value="EngA2"/>
    <property type="match status" value="1"/>
</dbReference>
<dbReference type="FunFam" id="3.30.300.20:FF:000004">
    <property type="entry name" value="GTPase Der"/>
    <property type="match status" value="1"/>
</dbReference>
<dbReference type="FunFam" id="3.40.50.300:FF:000040">
    <property type="entry name" value="GTPase Der"/>
    <property type="match status" value="1"/>
</dbReference>
<dbReference type="FunFam" id="3.40.50.300:FF:000057">
    <property type="entry name" value="GTPase Der"/>
    <property type="match status" value="1"/>
</dbReference>
<dbReference type="Gene3D" id="3.30.300.20">
    <property type="match status" value="1"/>
</dbReference>
<dbReference type="Gene3D" id="3.40.50.300">
    <property type="entry name" value="P-loop containing nucleotide triphosphate hydrolases"/>
    <property type="match status" value="2"/>
</dbReference>
<dbReference type="HAMAP" id="MF_00195">
    <property type="entry name" value="GTPase_Der"/>
    <property type="match status" value="1"/>
</dbReference>
<dbReference type="InterPro" id="IPR031166">
    <property type="entry name" value="G_ENGA"/>
</dbReference>
<dbReference type="InterPro" id="IPR006073">
    <property type="entry name" value="GTP-bd"/>
</dbReference>
<dbReference type="InterPro" id="IPR016484">
    <property type="entry name" value="GTPase_Der"/>
</dbReference>
<dbReference type="InterPro" id="IPR032859">
    <property type="entry name" value="KH_dom-like"/>
</dbReference>
<dbReference type="InterPro" id="IPR015946">
    <property type="entry name" value="KH_dom-like_a/b"/>
</dbReference>
<dbReference type="InterPro" id="IPR027417">
    <property type="entry name" value="P-loop_NTPase"/>
</dbReference>
<dbReference type="InterPro" id="IPR005225">
    <property type="entry name" value="Small_GTP-bd"/>
</dbReference>
<dbReference type="NCBIfam" id="TIGR03594">
    <property type="entry name" value="GTPase_EngA"/>
    <property type="match status" value="1"/>
</dbReference>
<dbReference type="NCBIfam" id="TIGR00231">
    <property type="entry name" value="small_GTP"/>
    <property type="match status" value="2"/>
</dbReference>
<dbReference type="PANTHER" id="PTHR43834">
    <property type="entry name" value="GTPASE DER"/>
    <property type="match status" value="1"/>
</dbReference>
<dbReference type="PANTHER" id="PTHR43834:SF6">
    <property type="entry name" value="GTPASE DER"/>
    <property type="match status" value="1"/>
</dbReference>
<dbReference type="Pfam" id="PF14714">
    <property type="entry name" value="KH_dom-like"/>
    <property type="match status" value="1"/>
</dbReference>
<dbReference type="Pfam" id="PF01926">
    <property type="entry name" value="MMR_HSR1"/>
    <property type="match status" value="2"/>
</dbReference>
<dbReference type="PIRSF" id="PIRSF006485">
    <property type="entry name" value="GTP-binding_EngA"/>
    <property type="match status" value="1"/>
</dbReference>
<dbReference type="SUPFAM" id="SSF52540">
    <property type="entry name" value="P-loop containing nucleoside triphosphate hydrolases"/>
    <property type="match status" value="2"/>
</dbReference>
<dbReference type="PROSITE" id="PS51712">
    <property type="entry name" value="G_ENGA"/>
    <property type="match status" value="2"/>
</dbReference>
<feature type="chain" id="PRO_1000124374" description="GTPase Der">
    <location>
        <begin position="1"/>
        <end position="436"/>
    </location>
</feature>
<feature type="domain" description="EngA-type G 1">
    <location>
        <begin position="4"/>
        <end position="167"/>
    </location>
</feature>
<feature type="domain" description="EngA-type G 2">
    <location>
        <begin position="175"/>
        <end position="351"/>
    </location>
</feature>
<feature type="domain" description="KH-like" evidence="1">
    <location>
        <begin position="352"/>
        <end position="436"/>
    </location>
</feature>
<feature type="binding site" evidence="1">
    <location>
        <begin position="10"/>
        <end position="17"/>
    </location>
    <ligand>
        <name>GTP</name>
        <dbReference type="ChEBI" id="CHEBI:37565"/>
        <label>1</label>
    </ligand>
</feature>
<feature type="binding site" evidence="1">
    <location>
        <begin position="57"/>
        <end position="61"/>
    </location>
    <ligand>
        <name>GTP</name>
        <dbReference type="ChEBI" id="CHEBI:37565"/>
        <label>1</label>
    </ligand>
</feature>
<feature type="binding site" evidence="1">
    <location>
        <begin position="119"/>
        <end position="122"/>
    </location>
    <ligand>
        <name>GTP</name>
        <dbReference type="ChEBI" id="CHEBI:37565"/>
        <label>1</label>
    </ligand>
</feature>
<feature type="binding site" evidence="1">
    <location>
        <begin position="181"/>
        <end position="188"/>
    </location>
    <ligand>
        <name>GTP</name>
        <dbReference type="ChEBI" id="CHEBI:37565"/>
        <label>2</label>
    </ligand>
</feature>
<feature type="binding site" evidence="1">
    <location>
        <begin position="229"/>
        <end position="233"/>
    </location>
    <ligand>
        <name>GTP</name>
        <dbReference type="ChEBI" id="CHEBI:37565"/>
        <label>2</label>
    </ligand>
</feature>
<feature type="binding site" evidence="1">
    <location>
        <begin position="294"/>
        <end position="297"/>
    </location>
    <ligand>
        <name>GTP</name>
        <dbReference type="ChEBI" id="CHEBI:37565"/>
        <label>2</label>
    </ligand>
</feature>
<keyword id="KW-0342">GTP-binding</keyword>
<keyword id="KW-0547">Nucleotide-binding</keyword>
<keyword id="KW-1185">Reference proteome</keyword>
<keyword id="KW-0677">Repeat</keyword>
<keyword id="KW-0690">Ribosome biogenesis</keyword>
<name>DER_STRU0</name>
<gene>
    <name evidence="1" type="primary">der</name>
    <name type="synonym">engA</name>
    <name type="ordered locus">SUB0384</name>
</gene>
<organism>
    <name type="scientific">Streptococcus uberis (strain ATCC BAA-854 / 0140J)</name>
    <dbReference type="NCBI Taxonomy" id="218495"/>
    <lineage>
        <taxon>Bacteria</taxon>
        <taxon>Bacillati</taxon>
        <taxon>Bacillota</taxon>
        <taxon>Bacilli</taxon>
        <taxon>Lactobacillales</taxon>
        <taxon>Streptococcaceae</taxon>
        <taxon>Streptococcus</taxon>
    </lineage>
</organism>